<organism>
    <name type="scientific">Methanocaldococcus jannaschii (strain ATCC 43067 / DSM 2661 / JAL-1 / JCM 10045 / NBRC 100440)</name>
    <name type="common">Methanococcus jannaschii</name>
    <dbReference type="NCBI Taxonomy" id="243232"/>
    <lineage>
        <taxon>Archaea</taxon>
        <taxon>Methanobacteriati</taxon>
        <taxon>Methanobacteriota</taxon>
        <taxon>Methanomada group</taxon>
        <taxon>Methanococci</taxon>
        <taxon>Methanococcales</taxon>
        <taxon>Methanocaldococcaceae</taxon>
        <taxon>Methanocaldococcus</taxon>
    </lineage>
</organism>
<keyword id="KW-1185">Reference proteome</keyword>
<dbReference type="EMBL" id="L77117">
    <property type="protein sequence ID" value="AAB98341.1"/>
    <property type="molecule type" value="Genomic_DNA"/>
</dbReference>
<dbReference type="PIR" id="H64343">
    <property type="entry name" value="H64343"/>
</dbReference>
<dbReference type="RefSeq" id="WP_010869851.1">
    <property type="nucleotide sequence ID" value="NC_000909.1"/>
</dbReference>
<dbReference type="STRING" id="243232.MJ_0352"/>
<dbReference type="PaxDb" id="243232-MJ_0352"/>
<dbReference type="EnsemblBacteria" id="AAB98341">
    <property type="protein sequence ID" value="AAB98341"/>
    <property type="gene ID" value="MJ_0352"/>
</dbReference>
<dbReference type="GeneID" id="1451209"/>
<dbReference type="KEGG" id="mja:MJ_0352"/>
<dbReference type="eggNOG" id="arCOG09665">
    <property type="taxonomic scope" value="Archaea"/>
</dbReference>
<dbReference type="HOGENOM" id="CLU_1149834_0_0_2"/>
<dbReference type="InParanoid" id="Q57798"/>
<dbReference type="OrthoDB" id="374623at2157"/>
<dbReference type="Proteomes" id="UP000000805">
    <property type="component" value="Chromosome"/>
</dbReference>
<feature type="chain" id="PRO_0000106823" description="Uncharacterized protein MJ0352">
    <location>
        <begin position="1"/>
        <end position="239"/>
    </location>
</feature>
<protein>
    <recommendedName>
        <fullName>Uncharacterized protein MJ0352</fullName>
    </recommendedName>
</protein>
<sequence>MCKYELAAKAHKNVYGVEIEVEEIKKQVEEIRKEHNNWIDESAAFVKWLETLELKDEFKKLREEERMNKNGNSIEVKASNNAMVVLEKTAEKVDSLDDVIEKMDSLDEDLMLLDEANEHLPLAYTYPDKKTGKEKIILSWAGIVKAMRMQGNIEVEPPTFQEVNGKIIATCRVRDLKRNIVMVGTAERVSPGRMGEEFKYTVLASKAIRNALKHIIEPKYLQMVIAEAKKRKSYVIITY</sequence>
<accession>Q57798</accession>
<reference key="1">
    <citation type="journal article" date="1996" name="Science">
        <title>Complete genome sequence of the methanogenic archaeon, Methanococcus jannaschii.</title>
        <authorList>
            <person name="Bult C.J."/>
            <person name="White O."/>
            <person name="Olsen G.J."/>
            <person name="Zhou L."/>
            <person name="Fleischmann R.D."/>
            <person name="Sutton G.G."/>
            <person name="Blake J.A."/>
            <person name="FitzGerald L.M."/>
            <person name="Clayton R.A."/>
            <person name="Gocayne J.D."/>
            <person name="Kerlavage A.R."/>
            <person name="Dougherty B.A."/>
            <person name="Tomb J.-F."/>
            <person name="Adams M.D."/>
            <person name="Reich C.I."/>
            <person name="Overbeek R."/>
            <person name="Kirkness E.F."/>
            <person name="Weinstock K.G."/>
            <person name="Merrick J.M."/>
            <person name="Glodek A."/>
            <person name="Scott J.L."/>
            <person name="Geoghagen N.S.M."/>
            <person name="Weidman J.F."/>
            <person name="Fuhrmann J.L."/>
            <person name="Nguyen D."/>
            <person name="Utterback T.R."/>
            <person name="Kelley J.M."/>
            <person name="Peterson J.D."/>
            <person name="Sadow P.W."/>
            <person name="Hanna M.C."/>
            <person name="Cotton M.D."/>
            <person name="Roberts K.M."/>
            <person name="Hurst M.A."/>
            <person name="Kaine B.P."/>
            <person name="Borodovsky M."/>
            <person name="Klenk H.-P."/>
            <person name="Fraser C.M."/>
            <person name="Smith H.O."/>
            <person name="Woese C.R."/>
            <person name="Venter J.C."/>
        </authorList>
    </citation>
    <scope>NUCLEOTIDE SEQUENCE [LARGE SCALE GENOMIC DNA]</scope>
    <source>
        <strain>ATCC 43067 / DSM 2661 / JAL-1 / JCM 10045 / NBRC 100440</strain>
    </source>
</reference>
<name>Y352_METJA</name>
<gene>
    <name type="ordered locus">MJ0352</name>
</gene>
<proteinExistence type="predicted"/>